<proteinExistence type="inferred from homology"/>
<keyword id="KW-0963">Cytoplasm</keyword>
<keyword id="KW-0251">Elongation factor</keyword>
<keyword id="KW-0648">Protein biosynthesis</keyword>
<organism>
    <name type="scientific">Prochlorococcus marinus (strain NATL1A)</name>
    <dbReference type="NCBI Taxonomy" id="167555"/>
    <lineage>
        <taxon>Bacteria</taxon>
        <taxon>Bacillati</taxon>
        <taxon>Cyanobacteriota</taxon>
        <taxon>Cyanophyceae</taxon>
        <taxon>Synechococcales</taxon>
        <taxon>Prochlorococcaceae</taxon>
        <taxon>Prochlorococcus</taxon>
    </lineage>
</organism>
<reference key="1">
    <citation type="journal article" date="2007" name="PLoS Genet.">
        <title>Patterns and implications of gene gain and loss in the evolution of Prochlorococcus.</title>
        <authorList>
            <person name="Kettler G.C."/>
            <person name="Martiny A.C."/>
            <person name="Huang K."/>
            <person name="Zucker J."/>
            <person name="Coleman M.L."/>
            <person name="Rodrigue S."/>
            <person name="Chen F."/>
            <person name="Lapidus A."/>
            <person name="Ferriera S."/>
            <person name="Johnson J."/>
            <person name="Steglich C."/>
            <person name="Church G.M."/>
            <person name="Richardson P."/>
            <person name="Chisholm S.W."/>
        </authorList>
    </citation>
    <scope>NUCLEOTIDE SEQUENCE [LARGE SCALE GENOMIC DNA]</scope>
    <source>
        <strain>NATL1A</strain>
    </source>
</reference>
<sequence length="187" mass="20761">MISSNDFRTGTTIELDGAVWRVIEFLHVKPGKGSAFVRTKLKAVVSGSVVEKTFRAGEMVPQALLEKSKLQHTYMDGDEFVFMDMTSYEETRLTAKQIGESRKYLKEGMEVNVVSWNEKPLEVELPNSVVLEIKETDPGVKGDTASGGTKPAILETGAQVMVPLFISIGEKIRVDTRNDSYLGRETQ</sequence>
<protein>
    <recommendedName>
        <fullName evidence="1">Elongation factor P</fullName>
        <shortName evidence="1">EF-P</shortName>
    </recommendedName>
</protein>
<dbReference type="EMBL" id="CP000553">
    <property type="protein sequence ID" value="ABM74589.1"/>
    <property type="molecule type" value="Genomic_DNA"/>
</dbReference>
<dbReference type="RefSeq" id="WP_011822827.1">
    <property type="nucleotide sequence ID" value="NC_008819.1"/>
</dbReference>
<dbReference type="SMR" id="A2BZC9"/>
<dbReference type="KEGG" id="pme:NATL1_00251"/>
<dbReference type="eggNOG" id="COG0231">
    <property type="taxonomic scope" value="Bacteria"/>
</dbReference>
<dbReference type="HOGENOM" id="CLU_074944_0_1_3"/>
<dbReference type="UniPathway" id="UPA00345"/>
<dbReference type="Proteomes" id="UP000002592">
    <property type="component" value="Chromosome"/>
</dbReference>
<dbReference type="GO" id="GO:0005737">
    <property type="term" value="C:cytoplasm"/>
    <property type="evidence" value="ECO:0007669"/>
    <property type="project" value="UniProtKB-SubCell"/>
</dbReference>
<dbReference type="GO" id="GO:0003746">
    <property type="term" value="F:translation elongation factor activity"/>
    <property type="evidence" value="ECO:0007669"/>
    <property type="project" value="UniProtKB-UniRule"/>
</dbReference>
<dbReference type="GO" id="GO:0043043">
    <property type="term" value="P:peptide biosynthetic process"/>
    <property type="evidence" value="ECO:0007669"/>
    <property type="project" value="InterPro"/>
</dbReference>
<dbReference type="CDD" id="cd04470">
    <property type="entry name" value="S1_EF-P_repeat_1"/>
    <property type="match status" value="1"/>
</dbReference>
<dbReference type="CDD" id="cd05794">
    <property type="entry name" value="S1_EF-P_repeat_2"/>
    <property type="match status" value="1"/>
</dbReference>
<dbReference type="FunFam" id="2.30.30.30:FF:000003">
    <property type="entry name" value="Elongation factor P"/>
    <property type="match status" value="1"/>
</dbReference>
<dbReference type="FunFam" id="2.40.50.140:FF:000004">
    <property type="entry name" value="Elongation factor P"/>
    <property type="match status" value="1"/>
</dbReference>
<dbReference type="FunFam" id="2.40.50.140:FF:000009">
    <property type="entry name" value="Elongation factor P"/>
    <property type="match status" value="1"/>
</dbReference>
<dbReference type="Gene3D" id="2.30.30.30">
    <property type="match status" value="1"/>
</dbReference>
<dbReference type="Gene3D" id="2.40.50.140">
    <property type="entry name" value="Nucleic acid-binding proteins"/>
    <property type="match status" value="2"/>
</dbReference>
<dbReference type="HAMAP" id="MF_00141">
    <property type="entry name" value="EF_P"/>
    <property type="match status" value="1"/>
</dbReference>
<dbReference type="InterPro" id="IPR015365">
    <property type="entry name" value="Elong-fact-P_C"/>
</dbReference>
<dbReference type="InterPro" id="IPR012340">
    <property type="entry name" value="NA-bd_OB-fold"/>
</dbReference>
<dbReference type="InterPro" id="IPR014722">
    <property type="entry name" value="Rib_uL2_dom2"/>
</dbReference>
<dbReference type="InterPro" id="IPR020599">
    <property type="entry name" value="Transl_elong_fac_P/YeiP"/>
</dbReference>
<dbReference type="InterPro" id="IPR013185">
    <property type="entry name" value="Transl_elong_KOW-like"/>
</dbReference>
<dbReference type="InterPro" id="IPR001059">
    <property type="entry name" value="Transl_elong_P/YeiP_cen"/>
</dbReference>
<dbReference type="InterPro" id="IPR013852">
    <property type="entry name" value="Transl_elong_P/YeiP_CS"/>
</dbReference>
<dbReference type="InterPro" id="IPR011768">
    <property type="entry name" value="Transl_elongation_fac_P"/>
</dbReference>
<dbReference type="InterPro" id="IPR008991">
    <property type="entry name" value="Translation_prot_SH3-like_sf"/>
</dbReference>
<dbReference type="NCBIfam" id="TIGR00038">
    <property type="entry name" value="efp"/>
    <property type="match status" value="1"/>
</dbReference>
<dbReference type="NCBIfam" id="NF001810">
    <property type="entry name" value="PRK00529.1"/>
    <property type="match status" value="1"/>
</dbReference>
<dbReference type="PANTHER" id="PTHR30053">
    <property type="entry name" value="ELONGATION FACTOR P"/>
    <property type="match status" value="1"/>
</dbReference>
<dbReference type="PANTHER" id="PTHR30053:SF12">
    <property type="entry name" value="ELONGATION FACTOR P (EF-P) FAMILY PROTEIN"/>
    <property type="match status" value="1"/>
</dbReference>
<dbReference type="Pfam" id="PF01132">
    <property type="entry name" value="EFP"/>
    <property type="match status" value="1"/>
</dbReference>
<dbReference type="Pfam" id="PF08207">
    <property type="entry name" value="EFP_N"/>
    <property type="match status" value="1"/>
</dbReference>
<dbReference type="Pfam" id="PF09285">
    <property type="entry name" value="Elong-fact-P_C"/>
    <property type="match status" value="1"/>
</dbReference>
<dbReference type="PIRSF" id="PIRSF005901">
    <property type="entry name" value="EF-P"/>
    <property type="match status" value="1"/>
</dbReference>
<dbReference type="SMART" id="SM01185">
    <property type="entry name" value="EFP"/>
    <property type="match status" value="1"/>
</dbReference>
<dbReference type="SMART" id="SM00841">
    <property type="entry name" value="Elong-fact-P_C"/>
    <property type="match status" value="1"/>
</dbReference>
<dbReference type="SUPFAM" id="SSF50249">
    <property type="entry name" value="Nucleic acid-binding proteins"/>
    <property type="match status" value="2"/>
</dbReference>
<dbReference type="SUPFAM" id="SSF50104">
    <property type="entry name" value="Translation proteins SH3-like domain"/>
    <property type="match status" value="1"/>
</dbReference>
<dbReference type="PROSITE" id="PS01275">
    <property type="entry name" value="EFP"/>
    <property type="match status" value="1"/>
</dbReference>
<evidence type="ECO:0000255" key="1">
    <source>
        <dbReference type="HAMAP-Rule" id="MF_00141"/>
    </source>
</evidence>
<gene>
    <name evidence="1" type="primary">efp</name>
    <name type="ordered locus">NATL1_00251</name>
</gene>
<accession>A2BZC9</accession>
<name>EFP_PROM1</name>
<feature type="chain" id="PRO_1000010804" description="Elongation factor P">
    <location>
        <begin position="1"/>
        <end position="187"/>
    </location>
</feature>
<comment type="function">
    <text evidence="1">Involved in peptide bond synthesis. Stimulates efficient translation and peptide-bond synthesis on native or reconstituted 70S ribosomes in vitro. Probably functions indirectly by altering the affinity of the ribosome for aminoacyl-tRNA, thus increasing their reactivity as acceptors for peptidyl transferase.</text>
</comment>
<comment type="pathway">
    <text evidence="1">Protein biosynthesis; polypeptide chain elongation.</text>
</comment>
<comment type="subcellular location">
    <subcellularLocation>
        <location evidence="1">Cytoplasm</location>
    </subcellularLocation>
</comment>
<comment type="similarity">
    <text evidence="1">Belongs to the elongation factor P family.</text>
</comment>